<protein>
    <recommendedName>
        <fullName evidence="2">Putative uncharacterized membrane protein YER079C-A</fullName>
    </recommendedName>
</protein>
<dbReference type="EMBL" id="KJ412233">
    <property type="protein sequence ID" value="AHX39276.1"/>
    <property type="molecule type" value="Genomic_DNA"/>
</dbReference>
<dbReference type="PaxDb" id="4932-YER079C-A"/>
<dbReference type="EnsemblFungi" id="YER079C-A_mRNA">
    <property type="protein sequence ID" value="YER079C-A"/>
    <property type="gene ID" value="YER079C-A"/>
</dbReference>
<dbReference type="AGR" id="SGD:S000028751"/>
<dbReference type="SGD" id="S000028751">
    <property type="gene designation" value="YER079C-A"/>
</dbReference>
<dbReference type="HOGENOM" id="CLU_2147302_0_0_1"/>
<dbReference type="GO" id="GO:0016020">
    <property type="term" value="C:membrane"/>
    <property type="evidence" value="ECO:0007669"/>
    <property type="project" value="UniProtKB-SubCell"/>
</dbReference>
<name>YE079_YEAST</name>
<organism>
    <name type="scientific">Saccharomyces cerevisiae (strain ATCC 204508 / S288c)</name>
    <name type="common">Baker's yeast</name>
    <dbReference type="NCBI Taxonomy" id="559292"/>
    <lineage>
        <taxon>Eukaryota</taxon>
        <taxon>Fungi</taxon>
        <taxon>Dikarya</taxon>
        <taxon>Ascomycota</taxon>
        <taxon>Saccharomycotina</taxon>
        <taxon>Saccharomycetes</taxon>
        <taxon>Saccharomycetales</taxon>
        <taxon>Saccharomycetaceae</taxon>
        <taxon>Saccharomyces</taxon>
    </lineage>
</organism>
<accession>A0A023PZB8</accession>
<reference key="1">
    <citation type="journal article" date="1997" name="Nature">
        <title>The nucleotide sequence of Saccharomyces cerevisiae chromosome V.</title>
        <authorList>
            <person name="Dietrich F.S."/>
            <person name="Mulligan J.T."/>
            <person name="Hennessy K.M."/>
            <person name="Yelton M.A."/>
            <person name="Allen E."/>
            <person name="Araujo R."/>
            <person name="Aviles E."/>
            <person name="Berno A."/>
            <person name="Brennan T."/>
            <person name="Carpenter J."/>
            <person name="Chen E."/>
            <person name="Cherry J.M."/>
            <person name="Chung E."/>
            <person name="Duncan M."/>
            <person name="Guzman E."/>
            <person name="Hartzell G."/>
            <person name="Hunicke-Smith S."/>
            <person name="Hyman R.W."/>
            <person name="Kayser A."/>
            <person name="Komp C."/>
            <person name="Lashkari D."/>
            <person name="Lew H."/>
            <person name="Lin D."/>
            <person name="Mosedale D."/>
            <person name="Nakahara K."/>
            <person name="Namath A."/>
            <person name="Norgren R."/>
            <person name="Oefner P."/>
            <person name="Oh C."/>
            <person name="Petel F.X."/>
            <person name="Roberts D."/>
            <person name="Sehl P."/>
            <person name="Schramm S."/>
            <person name="Shogren T."/>
            <person name="Smith V."/>
            <person name="Taylor P."/>
            <person name="Wei Y."/>
            <person name="Botstein D."/>
            <person name="Davis R.W."/>
        </authorList>
    </citation>
    <scope>NUCLEOTIDE SEQUENCE [LARGE SCALE GENOMIC DNA]</scope>
    <source>
        <strain>ATCC 204508 / S288c</strain>
    </source>
</reference>
<reference key="2">
    <citation type="journal article" date="2014" name="G3 (Bethesda)">
        <title>The reference genome sequence of Saccharomyces cerevisiae: Then and now.</title>
        <authorList>
            <person name="Engel S.R."/>
            <person name="Dietrich F.S."/>
            <person name="Fisk D.G."/>
            <person name="Binkley G."/>
            <person name="Balakrishnan R."/>
            <person name="Costanzo M.C."/>
            <person name="Dwight S.S."/>
            <person name="Hitz B.C."/>
            <person name="Karra K."/>
            <person name="Nash R.S."/>
            <person name="Weng S."/>
            <person name="Wong E.D."/>
            <person name="Lloyd P."/>
            <person name="Skrzypek M.S."/>
            <person name="Miyasato S.R."/>
            <person name="Simison M."/>
            <person name="Cherry J.M."/>
        </authorList>
    </citation>
    <scope>GENOME REANNOTATION</scope>
    <source>
        <strain>ATCC 204508 / S288c</strain>
    </source>
</reference>
<gene>
    <name evidence="4" type="ordered locus">YER079C-A</name>
</gene>
<proteinExistence type="uncertain"/>
<feature type="chain" id="PRO_0000430995" description="Putative uncharacterized membrane protein YER079C-A">
    <location>
        <begin position="1"/>
        <end position="112"/>
    </location>
</feature>
<feature type="transmembrane region" description="Helical; Name=1" evidence="1">
    <location>
        <begin position="55"/>
        <end position="75"/>
    </location>
</feature>
<feature type="transmembrane region" description="Helical; Name=2" evidence="1">
    <location>
        <begin position="91"/>
        <end position="111"/>
    </location>
</feature>
<keyword id="KW-0472">Membrane</keyword>
<keyword id="KW-0812">Transmembrane</keyword>
<keyword id="KW-1133">Transmembrane helix</keyword>
<comment type="subcellular location">
    <subcellularLocation>
        <location evidence="1">Membrane</location>
        <topology evidence="1">Multi-pass membrane protein</topology>
    </subcellularLocation>
</comment>
<comment type="miscellaneous">
    <text evidence="2">Partially overlaps AIM9.</text>
</comment>
<comment type="caution">
    <text evidence="3">Product of a dubious gene prediction unlikely to encode a functional protein. Because of that it is not part of the S.cerevisiae S288c complete/reference proteome set.</text>
</comment>
<evidence type="ECO:0000255" key="1"/>
<evidence type="ECO:0000305" key="2"/>
<evidence type="ECO:0000305" key="3">
    <source>
    </source>
</evidence>
<evidence type="ECO:0000312" key="4">
    <source>
        <dbReference type="SGD" id="S000028751"/>
    </source>
</evidence>
<sequence length="112" mass="12599">MSLRMRFKPSIENFVNLFSFSCLSFLSHEPHVYLKKASLFGSLSFVSLVKTSFGLLEINLLVAATVIHLIAPTLFEAPTTHLLEWPATVYLIMLGLRIAVLLAKQLLLLLLR</sequence>